<organism>
    <name type="scientific">Brucella abortus biovar 1 (strain 9-941)</name>
    <dbReference type="NCBI Taxonomy" id="262698"/>
    <lineage>
        <taxon>Bacteria</taxon>
        <taxon>Pseudomonadati</taxon>
        <taxon>Pseudomonadota</taxon>
        <taxon>Alphaproteobacteria</taxon>
        <taxon>Hyphomicrobiales</taxon>
        <taxon>Brucellaceae</taxon>
        <taxon>Brucella/Ochrobactrum group</taxon>
        <taxon>Brucella</taxon>
    </lineage>
</organism>
<protein>
    <recommendedName>
        <fullName evidence="1">Holo-[acyl-carrier-protein] synthase</fullName>
        <shortName evidence="1">Holo-ACP synthase</shortName>
        <ecNumber evidence="1">2.7.8.7</ecNumber>
    </recommendedName>
    <alternativeName>
        <fullName evidence="1">4'-phosphopantetheinyl transferase AcpS</fullName>
    </alternativeName>
</protein>
<keyword id="KW-0963">Cytoplasm</keyword>
<keyword id="KW-0275">Fatty acid biosynthesis</keyword>
<keyword id="KW-0276">Fatty acid metabolism</keyword>
<keyword id="KW-0444">Lipid biosynthesis</keyword>
<keyword id="KW-0443">Lipid metabolism</keyword>
<keyword id="KW-0460">Magnesium</keyword>
<keyword id="KW-0479">Metal-binding</keyword>
<keyword id="KW-0808">Transferase</keyword>
<evidence type="ECO:0000255" key="1">
    <source>
        <dbReference type="HAMAP-Rule" id="MF_00101"/>
    </source>
</evidence>
<proteinExistence type="inferred from homology"/>
<dbReference type="EC" id="2.7.8.7" evidence="1"/>
<dbReference type="EMBL" id="AE017223">
    <property type="protein sequence ID" value="AAX74051.1"/>
    <property type="molecule type" value="Genomic_DNA"/>
</dbReference>
<dbReference type="RefSeq" id="WP_002963803.1">
    <property type="nucleotide sequence ID" value="NC_006932.1"/>
</dbReference>
<dbReference type="SMR" id="Q57E83"/>
<dbReference type="EnsemblBacteria" id="AAX74051">
    <property type="protein sequence ID" value="AAX74051"/>
    <property type="gene ID" value="BruAb1_0676"/>
</dbReference>
<dbReference type="GeneID" id="97534013"/>
<dbReference type="KEGG" id="bmb:BruAb1_0676"/>
<dbReference type="HOGENOM" id="CLU_089696_0_2_5"/>
<dbReference type="Proteomes" id="UP000000540">
    <property type="component" value="Chromosome I"/>
</dbReference>
<dbReference type="GO" id="GO:0005737">
    <property type="term" value="C:cytoplasm"/>
    <property type="evidence" value="ECO:0007669"/>
    <property type="project" value="UniProtKB-SubCell"/>
</dbReference>
<dbReference type="GO" id="GO:0008897">
    <property type="term" value="F:holo-[acyl-carrier-protein] synthase activity"/>
    <property type="evidence" value="ECO:0007669"/>
    <property type="project" value="UniProtKB-UniRule"/>
</dbReference>
<dbReference type="GO" id="GO:0000287">
    <property type="term" value="F:magnesium ion binding"/>
    <property type="evidence" value="ECO:0007669"/>
    <property type="project" value="UniProtKB-UniRule"/>
</dbReference>
<dbReference type="GO" id="GO:0006633">
    <property type="term" value="P:fatty acid biosynthetic process"/>
    <property type="evidence" value="ECO:0007669"/>
    <property type="project" value="UniProtKB-UniRule"/>
</dbReference>
<dbReference type="Gene3D" id="3.90.470.20">
    <property type="entry name" value="4'-phosphopantetheinyl transferase domain"/>
    <property type="match status" value="1"/>
</dbReference>
<dbReference type="HAMAP" id="MF_00101">
    <property type="entry name" value="AcpS"/>
    <property type="match status" value="1"/>
</dbReference>
<dbReference type="InterPro" id="IPR008278">
    <property type="entry name" value="4-PPantetheinyl_Trfase_dom"/>
</dbReference>
<dbReference type="InterPro" id="IPR037143">
    <property type="entry name" value="4-PPantetheinyl_Trfase_dom_sf"/>
</dbReference>
<dbReference type="InterPro" id="IPR002582">
    <property type="entry name" value="ACPS"/>
</dbReference>
<dbReference type="InterPro" id="IPR004568">
    <property type="entry name" value="Ppantetheine-prot_Trfase_dom"/>
</dbReference>
<dbReference type="NCBIfam" id="TIGR00516">
    <property type="entry name" value="acpS"/>
    <property type="match status" value="1"/>
</dbReference>
<dbReference type="NCBIfam" id="TIGR00556">
    <property type="entry name" value="pantethn_trn"/>
    <property type="match status" value="1"/>
</dbReference>
<dbReference type="Pfam" id="PF01648">
    <property type="entry name" value="ACPS"/>
    <property type="match status" value="1"/>
</dbReference>
<dbReference type="SUPFAM" id="SSF56214">
    <property type="entry name" value="4'-phosphopantetheinyl transferase"/>
    <property type="match status" value="1"/>
</dbReference>
<reference key="1">
    <citation type="journal article" date="2005" name="J. Bacteriol.">
        <title>Completion of the genome sequence of Brucella abortus and comparison to the highly similar genomes of Brucella melitensis and Brucella suis.</title>
        <authorList>
            <person name="Halling S.M."/>
            <person name="Peterson-Burch B.D."/>
            <person name="Bricker B.J."/>
            <person name="Zuerner R.L."/>
            <person name="Qing Z."/>
            <person name="Li L.-L."/>
            <person name="Kapur V."/>
            <person name="Alt D.P."/>
            <person name="Olsen S.C."/>
        </authorList>
    </citation>
    <scope>NUCLEOTIDE SEQUENCE [LARGE SCALE GENOMIC DNA]</scope>
    <source>
        <strain>9-941</strain>
    </source>
</reference>
<gene>
    <name evidence="1" type="primary">acpS</name>
    <name type="ordered locus">BruAb1_0676</name>
</gene>
<name>ACPS_BRUAB</name>
<comment type="function">
    <text evidence="1">Transfers the 4'-phosphopantetheine moiety from coenzyme A to a Ser of acyl-carrier-protein.</text>
</comment>
<comment type="catalytic activity">
    <reaction evidence="1">
        <text>apo-[ACP] + CoA = holo-[ACP] + adenosine 3',5'-bisphosphate + H(+)</text>
        <dbReference type="Rhea" id="RHEA:12068"/>
        <dbReference type="Rhea" id="RHEA-COMP:9685"/>
        <dbReference type="Rhea" id="RHEA-COMP:9690"/>
        <dbReference type="ChEBI" id="CHEBI:15378"/>
        <dbReference type="ChEBI" id="CHEBI:29999"/>
        <dbReference type="ChEBI" id="CHEBI:57287"/>
        <dbReference type="ChEBI" id="CHEBI:58343"/>
        <dbReference type="ChEBI" id="CHEBI:64479"/>
        <dbReference type="EC" id="2.7.8.7"/>
    </reaction>
</comment>
<comment type="cofactor">
    <cofactor evidence="1">
        <name>Mg(2+)</name>
        <dbReference type="ChEBI" id="CHEBI:18420"/>
    </cofactor>
</comment>
<comment type="subcellular location">
    <subcellularLocation>
        <location evidence="1">Cytoplasm</location>
    </subcellularLocation>
</comment>
<comment type="similarity">
    <text evidence="1">Belongs to the P-Pant transferase superfamily. AcpS family.</text>
</comment>
<accession>Q57E83</accession>
<feature type="chain" id="PRO_0000228274" description="Holo-[acyl-carrier-protein] synthase">
    <location>
        <begin position="1"/>
        <end position="134"/>
    </location>
</feature>
<feature type="binding site" evidence="1">
    <location>
        <position position="8"/>
    </location>
    <ligand>
        <name>Mg(2+)</name>
        <dbReference type="ChEBI" id="CHEBI:18420"/>
    </ligand>
</feature>
<feature type="binding site" evidence="1">
    <location>
        <position position="57"/>
    </location>
    <ligand>
        <name>Mg(2+)</name>
        <dbReference type="ChEBI" id="CHEBI:18420"/>
    </ligand>
</feature>
<sequence>MIVGIGSDLIDIRRVEKTLERHGSRFRDRVFTEIEQRKSEGRKQRAASYAKRFAAKEACAKALGTGIAEGVFWRDMGVVNTPSGKPTMHLTGGAAKQLQKLLPAGTNAAIHLTITDDFPLAQAFVIIEALPVLE</sequence>